<protein>
    <recommendedName>
        <fullName>Inner kinetochore subunit fta1</fullName>
    </recommendedName>
    <alternativeName>
        <fullName>CENP-L homolog</fullName>
    </alternativeName>
    <alternativeName>
        <fullName>Constitutive centromere-associated network protein fta1</fullName>
    </alternativeName>
    <alternativeName>
        <fullName>Sim4 complex subunit fta1</fullName>
    </alternativeName>
    <alternativeName>
        <fullName>Sim4-mal2-associated protein 1</fullName>
    </alternativeName>
</protein>
<gene>
    <name type="primary">fta1</name>
    <name type="synonym">sma1</name>
    <name type="ORF">SPAC4F10.12</name>
</gene>
<keyword id="KW-0131">Cell cycle</keyword>
<keyword id="KW-0132">Cell division</keyword>
<keyword id="KW-0137">Centromere</keyword>
<keyword id="KW-0158">Chromosome</keyword>
<keyword id="KW-0159">Chromosome partition</keyword>
<keyword id="KW-0995">Kinetochore</keyword>
<keyword id="KW-0493">Microtubule</keyword>
<keyword id="KW-0498">Mitosis</keyword>
<keyword id="KW-0539">Nucleus</keyword>
<keyword id="KW-1185">Reference proteome</keyword>
<reference key="1">
    <citation type="journal article" date="2002" name="Nature">
        <title>The genome sequence of Schizosaccharomyces pombe.</title>
        <authorList>
            <person name="Wood V."/>
            <person name="Gwilliam R."/>
            <person name="Rajandream M.A."/>
            <person name="Lyne M.H."/>
            <person name="Lyne R."/>
            <person name="Stewart A."/>
            <person name="Sgouros J.G."/>
            <person name="Peat N."/>
            <person name="Hayles J."/>
            <person name="Baker S.G."/>
            <person name="Basham D."/>
            <person name="Bowman S."/>
            <person name="Brooks K."/>
            <person name="Brown D."/>
            <person name="Brown S."/>
            <person name="Chillingworth T."/>
            <person name="Churcher C.M."/>
            <person name="Collins M."/>
            <person name="Connor R."/>
            <person name="Cronin A."/>
            <person name="Davis P."/>
            <person name="Feltwell T."/>
            <person name="Fraser A."/>
            <person name="Gentles S."/>
            <person name="Goble A."/>
            <person name="Hamlin N."/>
            <person name="Harris D.E."/>
            <person name="Hidalgo J."/>
            <person name="Hodgson G."/>
            <person name="Holroyd S."/>
            <person name="Hornsby T."/>
            <person name="Howarth S."/>
            <person name="Huckle E.J."/>
            <person name="Hunt S."/>
            <person name="Jagels K."/>
            <person name="James K.D."/>
            <person name="Jones L."/>
            <person name="Jones M."/>
            <person name="Leather S."/>
            <person name="McDonald S."/>
            <person name="McLean J."/>
            <person name="Mooney P."/>
            <person name="Moule S."/>
            <person name="Mungall K.L."/>
            <person name="Murphy L.D."/>
            <person name="Niblett D."/>
            <person name="Odell C."/>
            <person name="Oliver K."/>
            <person name="O'Neil S."/>
            <person name="Pearson D."/>
            <person name="Quail M.A."/>
            <person name="Rabbinowitsch E."/>
            <person name="Rutherford K.M."/>
            <person name="Rutter S."/>
            <person name="Saunders D."/>
            <person name="Seeger K."/>
            <person name="Sharp S."/>
            <person name="Skelton J."/>
            <person name="Simmonds M.N."/>
            <person name="Squares R."/>
            <person name="Squares S."/>
            <person name="Stevens K."/>
            <person name="Taylor K."/>
            <person name="Taylor R.G."/>
            <person name="Tivey A."/>
            <person name="Walsh S.V."/>
            <person name="Warren T."/>
            <person name="Whitehead S."/>
            <person name="Woodward J.R."/>
            <person name="Volckaert G."/>
            <person name="Aert R."/>
            <person name="Robben J."/>
            <person name="Grymonprez B."/>
            <person name="Weltjens I."/>
            <person name="Vanstreels E."/>
            <person name="Rieger M."/>
            <person name="Schaefer M."/>
            <person name="Mueller-Auer S."/>
            <person name="Gabel C."/>
            <person name="Fuchs M."/>
            <person name="Duesterhoeft A."/>
            <person name="Fritzc C."/>
            <person name="Holzer E."/>
            <person name="Moestl D."/>
            <person name="Hilbert H."/>
            <person name="Borzym K."/>
            <person name="Langer I."/>
            <person name="Beck A."/>
            <person name="Lehrach H."/>
            <person name="Reinhardt R."/>
            <person name="Pohl T.M."/>
            <person name="Eger P."/>
            <person name="Zimmermann W."/>
            <person name="Wedler H."/>
            <person name="Wambutt R."/>
            <person name="Purnelle B."/>
            <person name="Goffeau A."/>
            <person name="Cadieu E."/>
            <person name="Dreano S."/>
            <person name="Gloux S."/>
            <person name="Lelaure V."/>
            <person name="Mottier S."/>
            <person name="Galibert F."/>
            <person name="Aves S.J."/>
            <person name="Xiang Z."/>
            <person name="Hunt C."/>
            <person name="Moore K."/>
            <person name="Hurst S.M."/>
            <person name="Lucas M."/>
            <person name="Rochet M."/>
            <person name="Gaillardin C."/>
            <person name="Tallada V.A."/>
            <person name="Garzon A."/>
            <person name="Thode G."/>
            <person name="Daga R.R."/>
            <person name="Cruzado L."/>
            <person name="Jimenez J."/>
            <person name="Sanchez M."/>
            <person name="del Rey F."/>
            <person name="Benito J."/>
            <person name="Dominguez A."/>
            <person name="Revuelta J.L."/>
            <person name="Moreno S."/>
            <person name="Armstrong J."/>
            <person name="Forsburg S.L."/>
            <person name="Cerutti L."/>
            <person name="Lowe T."/>
            <person name="McCombie W.R."/>
            <person name="Paulsen I."/>
            <person name="Potashkin J."/>
            <person name="Shpakovski G.V."/>
            <person name="Ussery D."/>
            <person name="Barrell B.G."/>
            <person name="Nurse P."/>
        </authorList>
    </citation>
    <scope>NUCLEOTIDE SEQUENCE [LARGE SCALE GENOMIC DNA]</scope>
    <source>
        <strain>972 / ATCC 24843</strain>
    </source>
</reference>
<reference key="2">
    <citation type="journal article" date="2005" name="EMBO J.">
        <title>Molecular analysis of kinetochore architecture in fission yeast.</title>
        <authorList>
            <person name="Liu X."/>
            <person name="McLeod I."/>
            <person name="Anderson S."/>
            <person name="Yates J.R. III"/>
            <person name="He X."/>
        </authorList>
    </citation>
    <scope>FUNCTION</scope>
    <scope>IDENTIFICATION IN THE SIM4 COMPLEX</scope>
    <scope>SUBCELLULAR LOCATION</scope>
</reference>
<dbReference type="EMBL" id="CU329670">
    <property type="protein sequence ID" value="CAB11715.1"/>
    <property type="molecule type" value="Genomic_DNA"/>
</dbReference>
<dbReference type="PIR" id="T38816">
    <property type="entry name" value="T38816"/>
</dbReference>
<dbReference type="RefSeq" id="NP_594755.1">
    <property type="nucleotide sequence ID" value="NM_001020182.2"/>
</dbReference>
<dbReference type="SMR" id="O36024"/>
<dbReference type="BioGRID" id="280064">
    <property type="interactions" value="8"/>
</dbReference>
<dbReference type="STRING" id="284812.O36024"/>
<dbReference type="PaxDb" id="4896-SPAC4F10.12.1"/>
<dbReference type="EnsemblFungi" id="SPAC4F10.12.1">
    <property type="protein sequence ID" value="SPAC4F10.12.1:pep"/>
    <property type="gene ID" value="SPAC4F10.12"/>
</dbReference>
<dbReference type="GeneID" id="2543650"/>
<dbReference type="KEGG" id="spo:2543650"/>
<dbReference type="PomBase" id="SPAC4F10.12">
    <property type="gene designation" value="fta1"/>
</dbReference>
<dbReference type="VEuPathDB" id="FungiDB:SPAC4F10.12"/>
<dbReference type="HOGENOM" id="CLU_998049_0_0_1"/>
<dbReference type="InParanoid" id="O36024"/>
<dbReference type="OMA" id="HIKRCTS"/>
<dbReference type="PRO" id="PR:O36024"/>
<dbReference type="Proteomes" id="UP000002485">
    <property type="component" value="Chromosome I"/>
</dbReference>
<dbReference type="GO" id="GO:0000776">
    <property type="term" value="C:kinetochore"/>
    <property type="evidence" value="ECO:0000314"/>
    <property type="project" value="PomBase"/>
</dbReference>
<dbReference type="GO" id="GO:0005874">
    <property type="term" value="C:microtubule"/>
    <property type="evidence" value="ECO:0007669"/>
    <property type="project" value="UniProtKB-KW"/>
</dbReference>
<dbReference type="GO" id="GO:0031511">
    <property type="term" value="C:Mis6-Sim4 complex"/>
    <property type="evidence" value="ECO:0000314"/>
    <property type="project" value="PomBase"/>
</dbReference>
<dbReference type="GO" id="GO:0005634">
    <property type="term" value="C:nucleus"/>
    <property type="evidence" value="ECO:0000305"/>
    <property type="project" value="PomBase"/>
</dbReference>
<dbReference type="GO" id="GO:0051315">
    <property type="term" value="P:attachment of mitotic spindle microtubules to kinetochore"/>
    <property type="evidence" value="ECO:0000315"/>
    <property type="project" value="PomBase"/>
</dbReference>
<dbReference type="GO" id="GO:0051301">
    <property type="term" value="P:cell division"/>
    <property type="evidence" value="ECO:0007669"/>
    <property type="project" value="UniProtKB-KW"/>
</dbReference>
<dbReference type="GO" id="GO:0051455">
    <property type="term" value="P:spindle attachment to meiosis I kinetochore"/>
    <property type="evidence" value="ECO:0000315"/>
    <property type="project" value="PomBase"/>
</dbReference>
<dbReference type="InterPro" id="IPR025204">
    <property type="entry name" value="CENP-L"/>
</dbReference>
<dbReference type="PANTHER" id="PTHR31740">
    <property type="entry name" value="CENTROMERE PROTEIN L"/>
    <property type="match status" value="1"/>
</dbReference>
<dbReference type="PANTHER" id="PTHR31740:SF2">
    <property type="entry name" value="CENTROMERE PROTEIN L"/>
    <property type="match status" value="1"/>
</dbReference>
<dbReference type="Pfam" id="PF13092">
    <property type="entry name" value="CENP-L"/>
    <property type="match status" value="1"/>
</dbReference>
<name>CENPL_SCHPO</name>
<proteinExistence type="evidence at protein level"/>
<evidence type="ECO:0000269" key="1">
    <source>
    </source>
</evidence>
<evidence type="ECO:0000305" key="2"/>
<organism>
    <name type="scientific">Schizosaccharomyces pombe (strain 972 / ATCC 24843)</name>
    <name type="common">Fission yeast</name>
    <dbReference type="NCBI Taxonomy" id="284812"/>
    <lineage>
        <taxon>Eukaryota</taxon>
        <taxon>Fungi</taxon>
        <taxon>Dikarya</taxon>
        <taxon>Ascomycota</taxon>
        <taxon>Taphrinomycotina</taxon>
        <taxon>Schizosaccharomycetes</taxon>
        <taxon>Schizosaccharomycetales</taxon>
        <taxon>Schizosaccharomycetaceae</taxon>
        <taxon>Schizosaccharomyces</taxon>
    </lineage>
</organism>
<accession>O36024</accession>
<feature type="chain" id="PRO_0000116724" description="Inner kinetochore subunit fta1">
    <location>
        <begin position="1"/>
        <end position="280"/>
    </location>
</feature>
<comment type="function">
    <text evidence="1">Component of the kinetochore, a multiprotein complex that assembles on centromeric DNA and attaches chromosomes to spindle microtubules, mediating chromosome segregation and sister chromatid segregation during meiosis and mitosis. Component of the inner kinetochore constitutive centromere-associated network (CCAN), which serves as a structural platform for outer kinetochore assembly.</text>
</comment>
<comment type="subunit">
    <text evidence="1">Component of the inner kinetochore constitutive centromere-associated network (CCAN) (also known as central kinetochore Sim4 complex in fission yeast), which is composed of at least cnl2, cnp3, cnp20, fta1, fta2, fta3, fta4, fta6, fta7, mal2, mhf1, mhf2, mis6, mis15, mis17, sim4 and wip1.</text>
</comment>
<comment type="subcellular location">
    <subcellularLocation>
        <location evidence="1">Nucleus</location>
    </subcellularLocation>
    <subcellularLocation>
        <location evidence="1">Chromosome</location>
        <location evidence="1">Centromere</location>
        <location evidence="1">Kinetochore</location>
    </subcellularLocation>
</comment>
<comment type="similarity">
    <text evidence="2">Belongs to the CENP-L/IML3 family.</text>
</comment>
<sequence>MTLRDHHFYNVTYTAYRLSPLFGFEYSNLTEIGKKLTRFLRYGTDRTGYFTNSTRFADLIIEKATFTEFGNTSSFPKFLKLDISYETSSDLEVKRKGQMFFFESFRKFSHAEADRTRLSLEGNSVFFSLALVRMDGALWMAVEQFLQQEFDTQILPCLIAPEILLEFLKIWQNHVNSQTALPLELTWTTGNPNLSSVTISIRPEDLKKIFRSSSFFYPILMEHIKRCTSLDLTNSVFSLSKVNTDCAILTSSGKLKIFSKAQNIVFDVLLALEPMQLPEY</sequence>